<proteinExistence type="inferred from homology"/>
<sequence>MSVEEKLNQAKGSIKEGVGKAIGDEKMEKEGAAEKVVSKVKEVAEDAKDAVEGAVEGVKNMLSGDDK</sequence>
<reference key="1">
    <citation type="journal article" date="2001" name="Science">
        <title>Complete genome sequence of a virulent isolate of Streptococcus pneumoniae.</title>
        <authorList>
            <person name="Tettelin H."/>
            <person name="Nelson K.E."/>
            <person name="Paulsen I.T."/>
            <person name="Eisen J.A."/>
            <person name="Read T.D."/>
            <person name="Peterson S.N."/>
            <person name="Heidelberg J.F."/>
            <person name="DeBoy R.T."/>
            <person name="Haft D.H."/>
            <person name="Dodson R.J."/>
            <person name="Durkin A.S."/>
            <person name="Gwinn M.L."/>
            <person name="Kolonay J.F."/>
            <person name="Nelson W.C."/>
            <person name="Peterson J.D."/>
            <person name="Umayam L.A."/>
            <person name="White O."/>
            <person name="Salzberg S.L."/>
            <person name="Lewis M.R."/>
            <person name="Radune D."/>
            <person name="Holtzapple E.K."/>
            <person name="Khouri H.M."/>
            <person name="Wolf A.M."/>
            <person name="Utterback T.R."/>
            <person name="Hansen C.L."/>
            <person name="McDonald L.A."/>
            <person name="Feldblyum T.V."/>
            <person name="Angiuoli S.V."/>
            <person name="Dickinson T."/>
            <person name="Hickey E.K."/>
            <person name="Holt I.E."/>
            <person name="Loftus B.J."/>
            <person name="Yang F."/>
            <person name="Smith H.O."/>
            <person name="Venter J.C."/>
            <person name="Dougherty B.A."/>
            <person name="Morrison D.A."/>
            <person name="Hollingshead S.K."/>
            <person name="Fraser C.M."/>
        </authorList>
    </citation>
    <scope>NUCLEOTIDE SEQUENCE [LARGE SCALE GENOMIC DNA]</scope>
    <source>
        <strain>ATCC BAA-334 / TIGR4</strain>
    </source>
</reference>
<name>Y1805_STRPN</name>
<protein>
    <recommendedName>
        <fullName>UPF0337 protein SP_1805</fullName>
    </recommendedName>
</protein>
<keyword id="KW-1185">Reference proteome</keyword>
<evidence type="ECO:0000256" key="1">
    <source>
        <dbReference type="SAM" id="MobiDB-lite"/>
    </source>
</evidence>
<evidence type="ECO:0000305" key="2"/>
<dbReference type="EMBL" id="AE005672">
    <property type="protein sequence ID" value="AAK75878.1"/>
    <property type="molecule type" value="Genomic_DNA"/>
</dbReference>
<dbReference type="PIR" id="E95210">
    <property type="entry name" value="E95210"/>
</dbReference>
<dbReference type="RefSeq" id="WP_000109957.1">
    <property type="nucleotide sequence ID" value="NZ_CP155539.1"/>
</dbReference>
<dbReference type="SMR" id="Q97P39"/>
<dbReference type="PaxDb" id="170187-SP_1805"/>
<dbReference type="EnsemblBacteria" id="AAK75878">
    <property type="protein sequence ID" value="AAK75878"/>
    <property type="gene ID" value="SP_1805"/>
</dbReference>
<dbReference type="KEGG" id="spn:SP_1805"/>
<dbReference type="eggNOG" id="COG3237">
    <property type="taxonomic scope" value="Bacteria"/>
</dbReference>
<dbReference type="PhylomeDB" id="Q97P39"/>
<dbReference type="BioCyc" id="SPNE170187:G1FZB-1836-MONOMER"/>
<dbReference type="Proteomes" id="UP000000585">
    <property type="component" value="Chromosome"/>
</dbReference>
<dbReference type="Gene3D" id="1.10.1470.10">
    <property type="entry name" value="YjbJ"/>
    <property type="match status" value="1"/>
</dbReference>
<dbReference type="InterPro" id="IPR008462">
    <property type="entry name" value="CsbD"/>
</dbReference>
<dbReference type="InterPro" id="IPR050423">
    <property type="entry name" value="UPF0337_stress_rsp"/>
</dbReference>
<dbReference type="InterPro" id="IPR036629">
    <property type="entry name" value="YjbJ_sf"/>
</dbReference>
<dbReference type="PANTHER" id="PTHR34977">
    <property type="entry name" value="UPF0337 PROTEIN YJBJ"/>
    <property type="match status" value="1"/>
</dbReference>
<dbReference type="PANTHER" id="PTHR34977:SF1">
    <property type="entry name" value="UPF0337 PROTEIN YJBJ"/>
    <property type="match status" value="1"/>
</dbReference>
<dbReference type="Pfam" id="PF05532">
    <property type="entry name" value="CsbD"/>
    <property type="match status" value="1"/>
</dbReference>
<dbReference type="SUPFAM" id="SSF69047">
    <property type="entry name" value="Hypothetical protein YjbJ"/>
    <property type="match status" value="1"/>
</dbReference>
<comment type="similarity">
    <text evidence="2">Belongs to the UPF0337 (CsbD) family.</text>
</comment>
<gene>
    <name type="ordered locus">SP_1805</name>
</gene>
<accession>Q97P39</accession>
<organism>
    <name type="scientific">Streptococcus pneumoniae serotype 4 (strain ATCC BAA-334 / TIGR4)</name>
    <dbReference type="NCBI Taxonomy" id="170187"/>
    <lineage>
        <taxon>Bacteria</taxon>
        <taxon>Bacillati</taxon>
        <taxon>Bacillota</taxon>
        <taxon>Bacilli</taxon>
        <taxon>Lactobacillales</taxon>
        <taxon>Streptococcaceae</taxon>
        <taxon>Streptococcus</taxon>
    </lineage>
</organism>
<feature type="chain" id="PRO_0000210048" description="UPF0337 protein SP_1805">
    <location>
        <begin position="1"/>
        <end position="67"/>
    </location>
</feature>
<feature type="region of interest" description="Disordered" evidence="1">
    <location>
        <begin position="1"/>
        <end position="30"/>
    </location>
</feature>